<reference key="1">
    <citation type="journal article" date="2008" name="Genome Res.">
        <title>Comparative genome analysis of Salmonella enteritidis PT4 and Salmonella gallinarum 287/91 provides insights into evolutionary and host adaptation pathways.</title>
        <authorList>
            <person name="Thomson N.R."/>
            <person name="Clayton D.J."/>
            <person name="Windhorst D."/>
            <person name="Vernikos G."/>
            <person name="Davidson S."/>
            <person name="Churcher C."/>
            <person name="Quail M.A."/>
            <person name="Stevens M."/>
            <person name="Jones M.A."/>
            <person name="Watson M."/>
            <person name="Barron A."/>
            <person name="Layton A."/>
            <person name="Pickard D."/>
            <person name="Kingsley R.A."/>
            <person name="Bignell A."/>
            <person name="Clark L."/>
            <person name="Harris B."/>
            <person name="Ormond D."/>
            <person name="Abdellah Z."/>
            <person name="Brooks K."/>
            <person name="Cherevach I."/>
            <person name="Chillingworth T."/>
            <person name="Woodward J."/>
            <person name="Norberczak H."/>
            <person name="Lord A."/>
            <person name="Arrowsmith C."/>
            <person name="Jagels K."/>
            <person name="Moule S."/>
            <person name="Mungall K."/>
            <person name="Saunders M."/>
            <person name="Whitehead S."/>
            <person name="Chabalgoity J.A."/>
            <person name="Maskell D."/>
            <person name="Humphreys T."/>
            <person name="Roberts M."/>
            <person name="Barrow P.A."/>
            <person name="Dougan G."/>
            <person name="Parkhill J."/>
        </authorList>
    </citation>
    <scope>NUCLEOTIDE SEQUENCE [LARGE SCALE GENOMIC DNA]</scope>
    <source>
        <strain>P125109</strain>
    </source>
</reference>
<gene>
    <name evidence="1" type="primary">cobQ</name>
    <name type="ordered locus">SEN2017</name>
</gene>
<proteinExistence type="inferred from homology"/>
<keyword id="KW-0169">Cobalamin biosynthesis</keyword>
<keyword id="KW-0315">Glutamine amidotransferase</keyword>
<evidence type="ECO:0000255" key="1">
    <source>
        <dbReference type="HAMAP-Rule" id="MF_00028"/>
    </source>
</evidence>
<name>COBQ_SALEP</name>
<sequence>MTQAVMLQGTASDVGKSVLAAGLCRIFYQDGLRTAPFKSQNMALNSGITSDGKEMGRAQIFQAEAAGITPDVRMNPVLLKPTSDRQAQVVLMGKVATNMDAVSYHDYKPRLREQILAVYNSLAQEYDVIVLEGAGSPAEINLRDRDIVNMGMAEMAQCPVILVADIDRGGVFAAIYGTLALLHKQERDRVKGVIINKFRGDVALLYSGIEQIESLTGVPVLGVMPWLDVDLEDEDGVALQNDKYRGNAPRDITIAIVQLPHISNFTDFNALAAQPDVRIRYIRRPEALTDADLVILPGSKNTLSDLAWLRESGMADALLQTHRQGVPVMGICGGYQMLGDTIVDEVESGLGTQPGLGLLNTITRFAQDKITTQVNATMSGELPSWLAAAAGLPVRGYEIHMGETVLQEGCCTAMTLQKNGCSVADGAVTADGLAFGTYLHGLFDSDAFTRAVVNGLRARKGLAPWETTFCYAEHKARQFDLLAEAMRQHIDIDKIYTIMQQHQEPV</sequence>
<accession>B5QYX6</accession>
<organism>
    <name type="scientific">Salmonella enteritidis PT4 (strain P125109)</name>
    <dbReference type="NCBI Taxonomy" id="550537"/>
    <lineage>
        <taxon>Bacteria</taxon>
        <taxon>Pseudomonadati</taxon>
        <taxon>Pseudomonadota</taxon>
        <taxon>Gammaproteobacteria</taxon>
        <taxon>Enterobacterales</taxon>
        <taxon>Enterobacteriaceae</taxon>
        <taxon>Salmonella</taxon>
    </lineage>
</organism>
<dbReference type="EMBL" id="AM933172">
    <property type="protein sequence ID" value="CAR33597.1"/>
    <property type="molecule type" value="Genomic_DNA"/>
</dbReference>
<dbReference type="RefSeq" id="WP_000189667.1">
    <property type="nucleotide sequence ID" value="NC_011294.1"/>
</dbReference>
<dbReference type="SMR" id="B5QYX6"/>
<dbReference type="KEGG" id="set:SEN2017"/>
<dbReference type="HOGENOM" id="CLU_019250_2_2_6"/>
<dbReference type="UniPathway" id="UPA00148"/>
<dbReference type="Proteomes" id="UP000000613">
    <property type="component" value="Chromosome"/>
</dbReference>
<dbReference type="GO" id="GO:0015420">
    <property type="term" value="F:ABC-type vitamin B12 transporter activity"/>
    <property type="evidence" value="ECO:0007669"/>
    <property type="project" value="UniProtKB-UniRule"/>
</dbReference>
<dbReference type="GO" id="GO:0003824">
    <property type="term" value="F:catalytic activity"/>
    <property type="evidence" value="ECO:0007669"/>
    <property type="project" value="InterPro"/>
</dbReference>
<dbReference type="GO" id="GO:0009236">
    <property type="term" value="P:cobalamin biosynthetic process"/>
    <property type="evidence" value="ECO:0007669"/>
    <property type="project" value="UniProtKB-UniRule"/>
</dbReference>
<dbReference type="CDD" id="cd05389">
    <property type="entry name" value="CobQ_N"/>
    <property type="match status" value="1"/>
</dbReference>
<dbReference type="CDD" id="cd01750">
    <property type="entry name" value="GATase1_CobQ"/>
    <property type="match status" value="1"/>
</dbReference>
<dbReference type="Gene3D" id="3.40.50.880">
    <property type="match status" value="1"/>
</dbReference>
<dbReference type="Gene3D" id="3.40.50.300">
    <property type="entry name" value="P-loop containing nucleotide triphosphate hydrolases"/>
    <property type="match status" value="1"/>
</dbReference>
<dbReference type="HAMAP" id="MF_00028">
    <property type="entry name" value="CobQ"/>
    <property type="match status" value="1"/>
</dbReference>
<dbReference type="InterPro" id="IPR029062">
    <property type="entry name" value="Class_I_gatase-like"/>
</dbReference>
<dbReference type="InterPro" id="IPR002586">
    <property type="entry name" value="CobQ/CobB/MinD/ParA_Nub-bd_dom"/>
</dbReference>
<dbReference type="InterPro" id="IPR033949">
    <property type="entry name" value="CobQ_GATase1"/>
</dbReference>
<dbReference type="InterPro" id="IPR047045">
    <property type="entry name" value="CobQ_N"/>
</dbReference>
<dbReference type="InterPro" id="IPR004459">
    <property type="entry name" value="CobQ_synth"/>
</dbReference>
<dbReference type="InterPro" id="IPR011698">
    <property type="entry name" value="GATase_3"/>
</dbReference>
<dbReference type="InterPro" id="IPR027417">
    <property type="entry name" value="P-loop_NTPase"/>
</dbReference>
<dbReference type="NCBIfam" id="TIGR00313">
    <property type="entry name" value="cobQ"/>
    <property type="match status" value="1"/>
</dbReference>
<dbReference type="NCBIfam" id="NF001989">
    <property type="entry name" value="PRK00784.1"/>
    <property type="match status" value="1"/>
</dbReference>
<dbReference type="PANTHER" id="PTHR21343:SF1">
    <property type="entry name" value="COBYRIC ACID SYNTHASE"/>
    <property type="match status" value="1"/>
</dbReference>
<dbReference type="PANTHER" id="PTHR21343">
    <property type="entry name" value="DETHIOBIOTIN SYNTHETASE"/>
    <property type="match status" value="1"/>
</dbReference>
<dbReference type="Pfam" id="PF01656">
    <property type="entry name" value="CbiA"/>
    <property type="match status" value="1"/>
</dbReference>
<dbReference type="Pfam" id="PF07685">
    <property type="entry name" value="GATase_3"/>
    <property type="match status" value="1"/>
</dbReference>
<dbReference type="SUPFAM" id="SSF52317">
    <property type="entry name" value="Class I glutamine amidotransferase-like"/>
    <property type="match status" value="1"/>
</dbReference>
<dbReference type="SUPFAM" id="SSF52540">
    <property type="entry name" value="P-loop containing nucleoside triphosphate hydrolases"/>
    <property type="match status" value="1"/>
</dbReference>
<dbReference type="PROSITE" id="PS51274">
    <property type="entry name" value="GATASE_COBBQ"/>
    <property type="match status" value="1"/>
</dbReference>
<protein>
    <recommendedName>
        <fullName evidence="1">Cobyric acid synthase</fullName>
    </recommendedName>
</protein>
<comment type="function">
    <text evidence="1">Catalyzes amidations at positions B, D, E, and G on adenosylcobyrinic A,C-diamide. NH(2) groups are provided by glutamine, and one molecule of ATP is hydrogenolyzed for each amidation.</text>
</comment>
<comment type="pathway">
    <text evidence="1">Cofactor biosynthesis; adenosylcobalamin biosynthesis.</text>
</comment>
<comment type="similarity">
    <text evidence="1">Belongs to the CobB/CobQ family. CobQ subfamily.</text>
</comment>
<feature type="chain" id="PRO_1000090245" description="Cobyric acid synthase">
    <location>
        <begin position="1"/>
        <end position="506"/>
    </location>
</feature>
<feature type="domain" description="GATase cobBQ-type" evidence="1">
    <location>
        <begin position="251"/>
        <end position="448"/>
    </location>
</feature>
<feature type="active site" description="Nucleophile" evidence="1">
    <location>
        <position position="332"/>
    </location>
</feature>
<feature type="active site" evidence="1">
    <location>
        <position position="440"/>
    </location>
</feature>